<organism>
    <name type="scientific">Arabidopsis thaliana</name>
    <name type="common">Mouse-ear cress</name>
    <dbReference type="NCBI Taxonomy" id="3702"/>
    <lineage>
        <taxon>Eukaryota</taxon>
        <taxon>Viridiplantae</taxon>
        <taxon>Streptophyta</taxon>
        <taxon>Embryophyta</taxon>
        <taxon>Tracheophyta</taxon>
        <taxon>Spermatophyta</taxon>
        <taxon>Magnoliopsida</taxon>
        <taxon>eudicotyledons</taxon>
        <taxon>Gunneridae</taxon>
        <taxon>Pentapetalae</taxon>
        <taxon>rosids</taxon>
        <taxon>malvids</taxon>
        <taxon>Brassicales</taxon>
        <taxon>Brassicaceae</taxon>
        <taxon>Camelineae</taxon>
        <taxon>Arabidopsis</taxon>
    </lineage>
</organism>
<comment type="function">
    <text evidence="1">Functions as an E3 ubiquitin ligase.</text>
</comment>
<comment type="catalytic activity">
    <reaction>
        <text>S-ubiquitinyl-[E2 ubiquitin-conjugating enzyme]-L-cysteine + [acceptor protein]-L-lysine = [E2 ubiquitin-conjugating enzyme]-L-cysteine + N(6)-ubiquitinyl-[acceptor protein]-L-lysine.</text>
        <dbReference type="EC" id="2.3.2.27"/>
    </reaction>
</comment>
<comment type="pathway">
    <text>Protein modification; protein ubiquitination.</text>
</comment>
<comment type="sequence caution" evidence="3">
    <conflict type="erroneous gene model prediction">
        <sequence resource="EMBL-CDS" id="AAC28533"/>
    </conflict>
</comment>
<evidence type="ECO:0000250" key="1"/>
<evidence type="ECO:0000255" key="2"/>
<evidence type="ECO:0000305" key="3"/>
<sequence>MMGKSGSQQLLMDEKIYVAVGSDLGNKSTLVWAIQNTGGKEFCIVHVHQPLYRKEKEKTQKILDKYLQKCRQMQVCAEMIHIKMESVEKGIIQLISERNVKKLVMGAASDTRYSMRMADLLSTKAIYIRQEAPATCCIWFTCKGYLVYKRESIMGNTSLEYASTSSGQDSVRSRGSVIPSRQFTISRGNGNVYQLAVFEAEKSKKEASLEAFKHQEVVKEKNEAIKRGKEWESAYLEELKQRKETEMELKKVREKLEKMRYISENRITESYMLVQKLQDKYNLATKVLRKAKEERDLLIKGRDIAIIEVEELRKEVSRSDEHREAPQYFICPISLEVMKDPQLAADGFTYEAEAISTWLQGGHETSPMTNTKLHHTKLVPNLALRSAIQEWLHASSSFRK</sequence>
<name>PUB37_ARATH</name>
<feature type="chain" id="PRO_0000322177" description="U-box domain-containing protein 37">
    <location>
        <begin position="1"/>
        <end position="400"/>
    </location>
</feature>
<feature type="domain" description="U-box">
    <location>
        <begin position="324"/>
        <end position="398"/>
    </location>
</feature>
<feature type="coiled-coil region" evidence="2">
    <location>
        <begin position="229"/>
        <end position="298"/>
    </location>
</feature>
<gene>
    <name type="primary">PUB37</name>
    <name type="ordered locus">At2g45920</name>
    <name type="ORF">F4I18.10</name>
</gene>
<accession>Q683D5</accession>
<accession>O80827</accession>
<proteinExistence type="evidence at transcript level"/>
<keyword id="KW-0175">Coiled coil</keyword>
<keyword id="KW-1185">Reference proteome</keyword>
<keyword id="KW-0808">Transferase</keyword>
<keyword id="KW-0833">Ubl conjugation pathway</keyword>
<reference key="1">
    <citation type="journal article" date="1999" name="Nature">
        <title>Sequence and analysis of chromosome 2 of the plant Arabidopsis thaliana.</title>
        <authorList>
            <person name="Lin X."/>
            <person name="Kaul S."/>
            <person name="Rounsley S.D."/>
            <person name="Shea T.P."/>
            <person name="Benito M.-I."/>
            <person name="Town C.D."/>
            <person name="Fujii C.Y."/>
            <person name="Mason T.M."/>
            <person name="Bowman C.L."/>
            <person name="Barnstead M.E."/>
            <person name="Feldblyum T.V."/>
            <person name="Buell C.R."/>
            <person name="Ketchum K.A."/>
            <person name="Lee J.J."/>
            <person name="Ronning C.M."/>
            <person name="Koo H.L."/>
            <person name="Moffat K.S."/>
            <person name="Cronin L.A."/>
            <person name="Shen M."/>
            <person name="Pai G."/>
            <person name="Van Aken S."/>
            <person name="Umayam L."/>
            <person name="Tallon L.J."/>
            <person name="Gill J.E."/>
            <person name="Adams M.D."/>
            <person name="Carrera A.J."/>
            <person name="Creasy T.H."/>
            <person name="Goodman H.M."/>
            <person name="Somerville C.R."/>
            <person name="Copenhaver G.P."/>
            <person name="Preuss D."/>
            <person name="Nierman W.C."/>
            <person name="White O."/>
            <person name="Eisen J.A."/>
            <person name="Salzberg S.L."/>
            <person name="Fraser C.M."/>
            <person name="Venter J.C."/>
        </authorList>
    </citation>
    <scope>NUCLEOTIDE SEQUENCE [LARGE SCALE GENOMIC DNA]</scope>
    <source>
        <strain>cv. Columbia</strain>
    </source>
</reference>
<reference key="2">
    <citation type="journal article" date="2017" name="Plant J.">
        <title>Araport11: a complete reannotation of the Arabidopsis thaliana reference genome.</title>
        <authorList>
            <person name="Cheng C.Y."/>
            <person name="Krishnakumar V."/>
            <person name="Chan A.P."/>
            <person name="Thibaud-Nissen F."/>
            <person name="Schobel S."/>
            <person name="Town C.D."/>
        </authorList>
    </citation>
    <scope>GENOME REANNOTATION</scope>
    <source>
        <strain>cv. Columbia</strain>
    </source>
</reference>
<reference key="3">
    <citation type="submission" date="2004-09" db="EMBL/GenBank/DDBJ databases">
        <title>Large-scale analysis of RIKEN Arabidopsis full-length (RAFL) cDNAs.</title>
        <authorList>
            <person name="Totoki Y."/>
            <person name="Seki M."/>
            <person name="Ishida J."/>
            <person name="Nakajima M."/>
            <person name="Enju A."/>
            <person name="Kamiya A."/>
            <person name="Narusaka M."/>
            <person name="Shin-i T."/>
            <person name="Nakagawa M."/>
            <person name="Sakamoto N."/>
            <person name="Oishi K."/>
            <person name="Kohara Y."/>
            <person name="Kobayashi M."/>
            <person name="Toyoda A."/>
            <person name="Sakaki Y."/>
            <person name="Sakurai T."/>
            <person name="Iida K."/>
            <person name="Akiyama K."/>
            <person name="Satou M."/>
            <person name="Toyoda T."/>
            <person name="Konagaya A."/>
            <person name="Carninci P."/>
            <person name="Kawai J."/>
            <person name="Hayashizaki Y."/>
            <person name="Shinozaki K."/>
        </authorList>
    </citation>
    <scope>NUCLEOTIDE SEQUENCE [LARGE SCALE MRNA]</scope>
    <source>
        <strain>cv. Columbia</strain>
    </source>
</reference>
<reference key="4">
    <citation type="submission" date="2004-11" db="EMBL/GenBank/DDBJ databases">
        <title>Arabidopsis ORF clones.</title>
        <authorList>
            <person name="Shinn P."/>
            <person name="Chen H."/>
            <person name="Cheuk R.F."/>
            <person name="Kim C.J."/>
            <person name="Ecker J.R."/>
        </authorList>
    </citation>
    <scope>NUCLEOTIDE SEQUENCE [LARGE SCALE MRNA]</scope>
    <source>
        <strain>cv. Columbia</strain>
    </source>
</reference>
<reference key="5">
    <citation type="journal article" date="2001" name="Trends Plant Sci.">
        <title>The U-box protein family in plants.</title>
        <authorList>
            <person name="Azevedo C."/>
            <person name="Santos-Rosa M.J."/>
            <person name="Shirasu K."/>
        </authorList>
    </citation>
    <scope>GENE FAMILY ORGANIZATION</scope>
    <scope>NOMENCLATURE</scope>
</reference>
<protein>
    <recommendedName>
        <fullName>U-box domain-containing protein 37</fullName>
        <ecNumber>2.3.2.27</ecNumber>
    </recommendedName>
    <alternativeName>
        <fullName>Plant U-box protein 37</fullName>
    </alternativeName>
    <alternativeName>
        <fullName evidence="3">RING-type E3 ubiquitin transferase PUB37</fullName>
    </alternativeName>
</protein>
<dbReference type="EC" id="2.3.2.27"/>
<dbReference type="EMBL" id="AC004665">
    <property type="protein sequence ID" value="AAC28533.1"/>
    <property type="status" value="ALT_SEQ"/>
    <property type="molecule type" value="Genomic_DNA"/>
</dbReference>
<dbReference type="EMBL" id="CP002685">
    <property type="protein sequence ID" value="AEC10617.1"/>
    <property type="molecule type" value="Genomic_DNA"/>
</dbReference>
<dbReference type="EMBL" id="AK175182">
    <property type="protein sequence ID" value="BAD42945.1"/>
    <property type="molecule type" value="mRNA"/>
</dbReference>
<dbReference type="EMBL" id="BT015764">
    <property type="protein sequence ID" value="AAU90054.1"/>
    <property type="molecule type" value="mRNA"/>
</dbReference>
<dbReference type="EMBL" id="BT020181">
    <property type="protein sequence ID" value="AAV43783.1"/>
    <property type="molecule type" value="mRNA"/>
</dbReference>
<dbReference type="PIR" id="T02455">
    <property type="entry name" value="T02455"/>
</dbReference>
<dbReference type="RefSeq" id="NP_182116.2">
    <property type="nucleotide sequence ID" value="NM_130155.5"/>
</dbReference>
<dbReference type="SMR" id="Q683D5"/>
<dbReference type="BioGRID" id="4536">
    <property type="interactions" value="6"/>
</dbReference>
<dbReference type="IntAct" id="Q683D5">
    <property type="interactions" value="6"/>
</dbReference>
<dbReference type="iPTMnet" id="Q683D5"/>
<dbReference type="PaxDb" id="3702-AT2G45920.1"/>
<dbReference type="EnsemblPlants" id="AT2G45920.1">
    <property type="protein sequence ID" value="AT2G45920.1"/>
    <property type="gene ID" value="AT2G45920"/>
</dbReference>
<dbReference type="GeneID" id="819200"/>
<dbReference type="Gramene" id="AT2G45920.1">
    <property type="protein sequence ID" value="AT2G45920.1"/>
    <property type="gene ID" value="AT2G45920"/>
</dbReference>
<dbReference type="KEGG" id="ath:AT2G45920"/>
<dbReference type="Araport" id="AT2G45920"/>
<dbReference type="TAIR" id="AT2G45920"/>
<dbReference type="eggNOG" id="ENOG502S95A">
    <property type="taxonomic scope" value="Eukaryota"/>
</dbReference>
<dbReference type="HOGENOM" id="CLU_036548_0_0_1"/>
<dbReference type="InParanoid" id="Q683D5"/>
<dbReference type="OMA" id="NTRGREF"/>
<dbReference type="OrthoDB" id="10064100at2759"/>
<dbReference type="PhylomeDB" id="Q683D5"/>
<dbReference type="UniPathway" id="UPA00143"/>
<dbReference type="PRO" id="PR:Q683D5"/>
<dbReference type="Proteomes" id="UP000006548">
    <property type="component" value="Chromosome 2"/>
</dbReference>
<dbReference type="ExpressionAtlas" id="Q683D5">
    <property type="expression patterns" value="baseline and differential"/>
</dbReference>
<dbReference type="GO" id="GO:0004842">
    <property type="term" value="F:ubiquitin-protein transferase activity"/>
    <property type="evidence" value="ECO:0007669"/>
    <property type="project" value="InterPro"/>
</dbReference>
<dbReference type="GO" id="GO:0016567">
    <property type="term" value="P:protein ubiquitination"/>
    <property type="evidence" value="ECO:0007669"/>
    <property type="project" value="UniProtKB-UniPathway"/>
</dbReference>
<dbReference type="CDD" id="cd16655">
    <property type="entry name" value="RING-Ubox_WDSUB1-like"/>
    <property type="match status" value="1"/>
</dbReference>
<dbReference type="CDD" id="cd01989">
    <property type="entry name" value="USP_STK_Ubox_N"/>
    <property type="match status" value="1"/>
</dbReference>
<dbReference type="Gene3D" id="3.30.40.10">
    <property type="entry name" value="Zinc/RING finger domain, C3HC4 (zinc finger)"/>
    <property type="match status" value="1"/>
</dbReference>
<dbReference type="InterPro" id="IPR051348">
    <property type="entry name" value="U-box_ubiquitin_ligases"/>
</dbReference>
<dbReference type="InterPro" id="IPR003613">
    <property type="entry name" value="Ubox_domain"/>
</dbReference>
<dbReference type="InterPro" id="IPR013083">
    <property type="entry name" value="Znf_RING/FYVE/PHD"/>
</dbReference>
<dbReference type="PANTHER" id="PTHR45647">
    <property type="entry name" value="OS02G0152300 PROTEIN"/>
    <property type="match status" value="1"/>
</dbReference>
<dbReference type="PANTHER" id="PTHR45647:SF149">
    <property type="entry name" value="U-BOX DOMAIN-CONTAINING PROTEIN 36-RELATED"/>
    <property type="match status" value="1"/>
</dbReference>
<dbReference type="Pfam" id="PF04564">
    <property type="entry name" value="U-box"/>
    <property type="match status" value="1"/>
</dbReference>
<dbReference type="SMART" id="SM00504">
    <property type="entry name" value="Ubox"/>
    <property type="match status" value="1"/>
</dbReference>
<dbReference type="SUPFAM" id="SSF52402">
    <property type="entry name" value="Adenine nucleotide alpha hydrolases-like"/>
    <property type="match status" value="1"/>
</dbReference>
<dbReference type="SUPFAM" id="SSF57850">
    <property type="entry name" value="RING/U-box"/>
    <property type="match status" value="1"/>
</dbReference>
<dbReference type="PROSITE" id="PS51698">
    <property type="entry name" value="U_BOX"/>
    <property type="match status" value="1"/>
</dbReference>